<feature type="chain" id="PRO_0000073538" description="Calcyphosin">
    <location>
        <begin position="1"/>
        <end position="275"/>
    </location>
</feature>
<feature type="domain" description="EF-hand 1" evidence="2">
    <location>
        <begin position="107"/>
        <end position="142"/>
    </location>
</feature>
<feature type="domain" description="EF-hand 2" evidence="2">
    <location>
        <begin position="143"/>
        <end position="178"/>
    </location>
</feature>
<feature type="domain" description="EF-hand 3" evidence="2">
    <location>
        <begin position="179"/>
        <end position="214"/>
    </location>
</feature>
<feature type="domain" description="EF-hand 4" evidence="2">
    <location>
        <begin position="222"/>
        <end position="258"/>
    </location>
</feature>
<feature type="region of interest" description="Disordered" evidence="3">
    <location>
        <begin position="59"/>
        <end position="87"/>
    </location>
</feature>
<feature type="binding site" evidence="2">
    <location>
        <position position="120"/>
    </location>
    <ligand>
        <name>Ca(2+)</name>
        <dbReference type="ChEBI" id="CHEBI:29108"/>
        <label>1</label>
    </ligand>
</feature>
<feature type="binding site" evidence="2">
    <location>
        <position position="122"/>
    </location>
    <ligand>
        <name>Ca(2+)</name>
        <dbReference type="ChEBI" id="CHEBI:29108"/>
        <label>1</label>
    </ligand>
</feature>
<feature type="binding site" evidence="2">
    <location>
        <position position="124"/>
    </location>
    <ligand>
        <name>Ca(2+)</name>
        <dbReference type="ChEBI" id="CHEBI:29108"/>
        <label>1</label>
    </ligand>
</feature>
<feature type="binding site" evidence="2">
    <location>
        <position position="126"/>
    </location>
    <ligand>
        <name>Ca(2+)</name>
        <dbReference type="ChEBI" id="CHEBI:29108"/>
        <label>1</label>
    </ligand>
</feature>
<feature type="binding site" evidence="2">
    <location>
        <position position="131"/>
    </location>
    <ligand>
        <name>Ca(2+)</name>
        <dbReference type="ChEBI" id="CHEBI:29108"/>
        <label>1</label>
    </ligand>
</feature>
<feature type="binding site" evidence="2">
    <location>
        <position position="156"/>
    </location>
    <ligand>
        <name>Ca(2+)</name>
        <dbReference type="ChEBI" id="CHEBI:29108"/>
        <label>2</label>
    </ligand>
</feature>
<feature type="binding site" evidence="2">
    <location>
        <position position="158"/>
    </location>
    <ligand>
        <name>Ca(2+)</name>
        <dbReference type="ChEBI" id="CHEBI:29108"/>
        <label>2</label>
    </ligand>
</feature>
<feature type="binding site" evidence="2">
    <location>
        <position position="160"/>
    </location>
    <ligand>
        <name>Ca(2+)</name>
        <dbReference type="ChEBI" id="CHEBI:29108"/>
        <label>2</label>
    </ligand>
</feature>
<feature type="binding site" evidence="2">
    <location>
        <position position="162"/>
    </location>
    <ligand>
        <name>Ca(2+)</name>
        <dbReference type="ChEBI" id="CHEBI:29108"/>
        <label>2</label>
    </ligand>
</feature>
<feature type="binding site" evidence="2">
    <location>
        <position position="167"/>
    </location>
    <ligand>
        <name>Ca(2+)</name>
        <dbReference type="ChEBI" id="CHEBI:29108"/>
        <label>2</label>
    </ligand>
</feature>
<feature type="binding site" evidence="2">
    <location>
        <position position="192"/>
    </location>
    <ligand>
        <name>Ca(2+)</name>
        <dbReference type="ChEBI" id="CHEBI:29108"/>
        <label>3</label>
    </ligand>
</feature>
<feature type="binding site" evidence="2">
    <location>
        <position position="194"/>
    </location>
    <ligand>
        <name>Ca(2+)</name>
        <dbReference type="ChEBI" id="CHEBI:29108"/>
        <label>3</label>
    </ligand>
</feature>
<feature type="binding site" evidence="2">
    <location>
        <position position="196"/>
    </location>
    <ligand>
        <name>Ca(2+)</name>
        <dbReference type="ChEBI" id="CHEBI:29108"/>
        <label>3</label>
    </ligand>
</feature>
<feature type="binding site" evidence="2">
    <location>
        <position position="203"/>
    </location>
    <ligand>
        <name>Ca(2+)</name>
        <dbReference type="ChEBI" id="CHEBI:29108"/>
        <label>3</label>
    </ligand>
</feature>
<feature type="modified residue" description="Phosphoserine; by PKA" evidence="1">
    <location>
        <position position="126"/>
    </location>
</feature>
<feature type="splice variant" id="VSP_059695" description="In isoform 3." evidence="6">
    <location>
        <begin position="1"/>
        <end position="86"/>
    </location>
</feature>
<feature type="splice variant" id="VSP_055154" description="In isoform 2." evidence="6">
    <location>
        <begin position="217"/>
        <end position="243"/>
    </location>
</feature>
<feature type="sequence variant" id="VAR_048638" description="In dbSNP:rs7249419.">
    <original>R</original>
    <variation>G</variation>
    <location>
        <position position="125"/>
    </location>
</feature>
<feature type="sequence variant" id="VAR_080772" description="Found in a consanguineous family with intellectual disability; uncertain significance; dbSNP:rs375700493." evidence="5">
    <original>R</original>
    <variation>Q</variation>
    <location>
        <position position="180"/>
    </location>
</feature>
<feature type="helix" evidence="10">
    <location>
        <begin position="88"/>
        <end position="98"/>
    </location>
</feature>
<feature type="turn" evidence="10">
    <location>
        <begin position="102"/>
        <end position="104"/>
    </location>
</feature>
<feature type="helix" evidence="10">
    <location>
        <begin position="114"/>
        <end position="119"/>
    </location>
</feature>
<feature type="strand" evidence="10">
    <location>
        <begin position="125"/>
        <end position="127"/>
    </location>
</feature>
<feature type="helix" evidence="10">
    <location>
        <begin position="129"/>
        <end position="137"/>
    </location>
</feature>
<feature type="turn" evidence="10">
    <location>
        <begin position="138"/>
        <end position="140"/>
    </location>
</feature>
<feature type="helix" evidence="10">
    <location>
        <begin position="145"/>
        <end position="155"/>
    </location>
</feature>
<feature type="strand" evidence="10">
    <location>
        <begin position="160"/>
        <end position="163"/>
    </location>
</feature>
<feature type="helix" evidence="10">
    <location>
        <begin position="165"/>
        <end position="171"/>
    </location>
</feature>
<feature type="helix" evidence="10">
    <location>
        <begin position="178"/>
        <end position="191"/>
    </location>
</feature>
<feature type="strand" evidence="10">
    <location>
        <begin position="196"/>
        <end position="199"/>
    </location>
</feature>
<feature type="helix" evidence="10">
    <location>
        <begin position="201"/>
        <end position="207"/>
    </location>
</feature>
<feature type="helix" evidence="10">
    <location>
        <begin position="214"/>
        <end position="217"/>
    </location>
</feature>
<feature type="helix" evidence="10">
    <location>
        <begin position="223"/>
        <end position="234"/>
    </location>
</feature>
<feature type="helix" evidence="10">
    <location>
        <begin position="245"/>
        <end position="258"/>
    </location>
</feature>
<feature type="helix" evidence="10">
    <location>
        <begin position="262"/>
        <end position="273"/>
    </location>
</feature>
<dbReference type="EMBL" id="AK090469">
    <property type="protein sequence ID" value="BAC03450.1"/>
    <property type="status" value="ALT_INIT"/>
    <property type="molecule type" value="mRNA"/>
</dbReference>
<dbReference type="EMBL" id="AC004602">
    <property type="protein sequence ID" value="AAC14484.1"/>
    <property type="status" value="ALT_INIT"/>
    <property type="molecule type" value="Genomic_DNA"/>
</dbReference>
<dbReference type="EMBL" id="AC104532">
    <property type="status" value="NOT_ANNOTATED_CDS"/>
    <property type="molecule type" value="Genomic_DNA"/>
</dbReference>
<dbReference type="EMBL" id="CH471139">
    <property type="protein sequence ID" value="EAW69126.1"/>
    <property type="molecule type" value="Genomic_DNA"/>
</dbReference>
<dbReference type="EMBL" id="CH471139">
    <property type="protein sequence ID" value="EAW69128.1"/>
    <property type="molecule type" value="Genomic_DNA"/>
</dbReference>
<dbReference type="EMBL" id="BC019065">
    <property type="status" value="NOT_ANNOTATED_CDS"/>
    <property type="molecule type" value="mRNA"/>
</dbReference>
<dbReference type="EMBL" id="BC080599">
    <property type="protein sequence ID" value="AAH80599.1"/>
    <property type="status" value="ALT_INIT"/>
    <property type="molecule type" value="mRNA"/>
</dbReference>
<dbReference type="EMBL" id="BC101513">
    <property type="protein sequence ID" value="AAI01514.1"/>
    <property type="molecule type" value="mRNA"/>
</dbReference>
<dbReference type="EMBL" id="BC104766">
    <property type="protein sequence ID" value="AAI04767.1"/>
    <property type="molecule type" value="mRNA"/>
</dbReference>
<dbReference type="EMBL" id="X97966">
    <property type="protein sequence ID" value="CAA66609.1"/>
    <property type="molecule type" value="mRNA"/>
</dbReference>
<dbReference type="CCDS" id="CCDS12156.3">
    <molecule id="Q13938-4"/>
</dbReference>
<dbReference type="RefSeq" id="NP_004049.3">
    <molecule id="Q13938-4"/>
    <property type="nucleotide sequence ID" value="NM_004058.5"/>
</dbReference>
<dbReference type="RefSeq" id="NP_542157.2">
    <property type="nucleotide sequence ID" value="NM_080590.3"/>
</dbReference>
<dbReference type="PDB" id="3E3R">
    <property type="method" value="X-ray"/>
    <property type="resolution" value="2.65 A"/>
    <property type="chains" value="A/B=87-275"/>
</dbReference>
<dbReference type="PDBsum" id="3E3R"/>
<dbReference type="SMR" id="Q13938"/>
<dbReference type="BioGRID" id="107278">
    <property type="interactions" value="51"/>
</dbReference>
<dbReference type="FunCoup" id="Q13938">
    <property type="interactions" value="48"/>
</dbReference>
<dbReference type="IntAct" id="Q13938">
    <property type="interactions" value="20"/>
</dbReference>
<dbReference type="MINT" id="Q13938"/>
<dbReference type="STRING" id="9606.ENSP00000498855"/>
<dbReference type="DrugBank" id="DB11093">
    <property type="generic name" value="Calcium citrate"/>
</dbReference>
<dbReference type="DrugBank" id="DB11348">
    <property type="generic name" value="Calcium Phosphate"/>
</dbReference>
<dbReference type="DrugBank" id="DB14481">
    <property type="generic name" value="Calcium phosphate dihydrate"/>
</dbReference>
<dbReference type="GlyGen" id="Q13938">
    <property type="glycosylation" value="2 sites, 1 O-linked glycan (2 sites)"/>
</dbReference>
<dbReference type="iPTMnet" id="Q13938"/>
<dbReference type="PhosphoSitePlus" id="Q13938"/>
<dbReference type="BioMuta" id="CAPS"/>
<dbReference type="DMDM" id="2493439"/>
<dbReference type="CPTAC" id="CPTAC-179"/>
<dbReference type="CPTAC" id="CPTAC-180"/>
<dbReference type="jPOST" id="Q13938"/>
<dbReference type="MassIVE" id="Q13938"/>
<dbReference type="PaxDb" id="9606-ENSP00000484912"/>
<dbReference type="PeptideAtlas" id="Q13938"/>
<dbReference type="ProteomicsDB" id="59760">
    <molecule id="Q13938-1"/>
</dbReference>
<dbReference type="Antibodypedia" id="24025">
    <property type="antibodies" value="133 antibodies from 23 providers"/>
</dbReference>
<dbReference type="DNASU" id="828"/>
<dbReference type="Ensembl" id="ENST00000588776.8">
    <molecule id="Q13938-4"/>
    <property type="protein sequence ID" value="ENSP00000465883.2"/>
    <property type="gene ID" value="ENSG00000105519.18"/>
</dbReference>
<dbReference type="GeneID" id="828"/>
<dbReference type="KEGG" id="hsa:828"/>
<dbReference type="MANE-Select" id="ENST00000588776.8">
    <molecule id="Q13938-4"/>
    <property type="protein sequence ID" value="ENSP00000465883.2"/>
    <property type="RefSeq nucleotide sequence ID" value="NM_004058.5"/>
    <property type="RefSeq protein sequence ID" value="NP_004049.3"/>
</dbReference>
<dbReference type="UCSC" id="uc002mdt.4">
    <molecule id="Q13938-1"/>
    <property type="organism name" value="human"/>
</dbReference>
<dbReference type="UCSC" id="uc060seu.1">
    <property type="organism name" value="human"/>
</dbReference>
<dbReference type="AGR" id="HGNC:1487"/>
<dbReference type="CTD" id="828"/>
<dbReference type="DisGeNET" id="828"/>
<dbReference type="GeneCards" id="CAPS"/>
<dbReference type="HGNC" id="HGNC:1487">
    <property type="gene designation" value="CAPS"/>
</dbReference>
<dbReference type="HPA" id="ENSG00000105519">
    <property type="expression patterns" value="Tissue enhanced (fallopian)"/>
</dbReference>
<dbReference type="MIM" id="114212">
    <property type="type" value="gene"/>
</dbReference>
<dbReference type="neXtProt" id="NX_Q13938"/>
<dbReference type="OpenTargets" id="ENSG00000105519"/>
<dbReference type="PharmGKB" id="PA26068"/>
<dbReference type="VEuPathDB" id="HostDB:ENSG00000105519"/>
<dbReference type="eggNOG" id="KOG0032">
    <property type="taxonomic scope" value="Eukaryota"/>
</dbReference>
<dbReference type="GeneTree" id="ENSGT00940000162442"/>
<dbReference type="HOGENOM" id="CLU_036726_1_0_1"/>
<dbReference type="InParanoid" id="Q13938"/>
<dbReference type="OMA" id="NSKHHPK"/>
<dbReference type="OrthoDB" id="444540at2759"/>
<dbReference type="PAN-GO" id="Q13938">
    <property type="GO annotations" value="0 GO annotations based on evolutionary models"/>
</dbReference>
<dbReference type="PhylomeDB" id="Q13938"/>
<dbReference type="TreeFam" id="TF318191"/>
<dbReference type="PathwayCommons" id="Q13938"/>
<dbReference type="SignaLink" id="Q13938"/>
<dbReference type="BioGRID-ORCS" id="828">
    <property type="hits" value="34 hits in 1151 CRISPR screens"/>
</dbReference>
<dbReference type="ChiTaRS" id="CAPS">
    <property type="organism name" value="human"/>
</dbReference>
<dbReference type="EvolutionaryTrace" id="Q13938"/>
<dbReference type="GeneWiki" id="CAPS_(gene)"/>
<dbReference type="GenomeRNAi" id="828"/>
<dbReference type="Pharos" id="Q13938">
    <property type="development level" value="Tbio"/>
</dbReference>
<dbReference type="PRO" id="PR:Q13938"/>
<dbReference type="Proteomes" id="UP000005640">
    <property type="component" value="Chromosome 19"/>
</dbReference>
<dbReference type="RNAct" id="Q13938">
    <property type="molecule type" value="protein"/>
</dbReference>
<dbReference type="Bgee" id="ENSG00000105519">
    <property type="expression patterns" value="Expressed in bronchial epithelial cell and 175 other cell types or tissues"/>
</dbReference>
<dbReference type="ExpressionAtlas" id="Q13938">
    <property type="expression patterns" value="baseline and differential"/>
</dbReference>
<dbReference type="GO" id="GO:0005829">
    <property type="term" value="C:cytosol"/>
    <property type="evidence" value="ECO:0000314"/>
    <property type="project" value="HPA"/>
</dbReference>
<dbReference type="GO" id="GO:0005654">
    <property type="term" value="C:nucleoplasm"/>
    <property type="evidence" value="ECO:0000314"/>
    <property type="project" value="HPA"/>
</dbReference>
<dbReference type="GO" id="GO:0005886">
    <property type="term" value="C:plasma membrane"/>
    <property type="evidence" value="ECO:0000314"/>
    <property type="project" value="HPA"/>
</dbReference>
<dbReference type="GO" id="GO:0031982">
    <property type="term" value="C:vesicle"/>
    <property type="evidence" value="ECO:0007005"/>
    <property type="project" value="UniProtKB"/>
</dbReference>
<dbReference type="GO" id="GO:0005509">
    <property type="term" value="F:calcium ion binding"/>
    <property type="evidence" value="ECO:0000304"/>
    <property type="project" value="ProtInc"/>
</dbReference>
<dbReference type="GO" id="GO:0035556">
    <property type="term" value="P:intracellular signal transduction"/>
    <property type="evidence" value="ECO:0000304"/>
    <property type="project" value="ProtInc"/>
</dbReference>
<dbReference type="CDD" id="cd00051">
    <property type="entry name" value="EFh"/>
    <property type="match status" value="1"/>
</dbReference>
<dbReference type="FunFam" id="1.10.238.10:FF:000294">
    <property type="entry name" value="Calcyphosin"/>
    <property type="match status" value="1"/>
</dbReference>
<dbReference type="FunFam" id="1.10.238.10:FF:000329">
    <property type="entry name" value="calcyphosin isoform X2"/>
    <property type="match status" value="1"/>
</dbReference>
<dbReference type="Gene3D" id="1.10.238.10">
    <property type="entry name" value="EF-hand"/>
    <property type="match status" value="2"/>
</dbReference>
<dbReference type="InterPro" id="IPR051581">
    <property type="entry name" value="Ca-bind_SignalingProt"/>
</dbReference>
<dbReference type="InterPro" id="IPR011992">
    <property type="entry name" value="EF-hand-dom_pair"/>
</dbReference>
<dbReference type="InterPro" id="IPR018247">
    <property type="entry name" value="EF_Hand_1_Ca_BS"/>
</dbReference>
<dbReference type="InterPro" id="IPR002048">
    <property type="entry name" value="EF_hand_dom"/>
</dbReference>
<dbReference type="PANTHER" id="PTHR34524">
    <property type="entry name" value="CALCYPHOSIN"/>
    <property type="match status" value="1"/>
</dbReference>
<dbReference type="PANTHER" id="PTHR34524:SF2">
    <property type="entry name" value="CALCYPHOSIN"/>
    <property type="match status" value="1"/>
</dbReference>
<dbReference type="Pfam" id="PF13499">
    <property type="entry name" value="EF-hand_7"/>
    <property type="match status" value="2"/>
</dbReference>
<dbReference type="SMART" id="SM00054">
    <property type="entry name" value="EFh"/>
    <property type="match status" value="4"/>
</dbReference>
<dbReference type="SUPFAM" id="SSF47473">
    <property type="entry name" value="EF-hand"/>
    <property type="match status" value="1"/>
</dbReference>
<dbReference type="PROSITE" id="PS00018">
    <property type="entry name" value="EF_HAND_1"/>
    <property type="match status" value="3"/>
</dbReference>
<dbReference type="PROSITE" id="PS50222">
    <property type="entry name" value="EF_HAND_2"/>
    <property type="match status" value="4"/>
</dbReference>
<sequence>MQCHRDLALSQALWGWQLSKQSGWAHPSLPHSPLPSTVHSCSWAPPHLQRHLPLATVSPGTTQLTQGPAGRTLGQTQASCPEPRPSMDAVDATMEKLRAQCLSRGASGIQGLARFFRQLDRDGSRSLDADEFRQGLAKLGLVLDQAEAEGVCRKWDRNGSGTLDLEEFLRALRPPMSQAREAVIAAAFAKLDRSGDGVVTVDDLRGVYSGRAHPKVRSGEWTEDEVLRRFLDNFDSSEKDGQVTLAEFQDYYSGVSASMNTDEEFVAMMTSAWQL</sequence>
<name>CAYP1_HUMAN</name>
<organism>
    <name type="scientific">Homo sapiens</name>
    <name type="common">Human</name>
    <dbReference type="NCBI Taxonomy" id="9606"/>
    <lineage>
        <taxon>Eukaryota</taxon>
        <taxon>Metazoa</taxon>
        <taxon>Chordata</taxon>
        <taxon>Craniata</taxon>
        <taxon>Vertebrata</taxon>
        <taxon>Euteleostomi</taxon>
        <taxon>Mammalia</taxon>
        <taxon>Eutheria</taxon>
        <taxon>Euarchontoglires</taxon>
        <taxon>Primates</taxon>
        <taxon>Haplorrhini</taxon>
        <taxon>Catarrhini</taxon>
        <taxon>Hominidae</taxon>
        <taxon>Homo</taxon>
    </lineage>
</organism>
<accession>Q13938</accession>
<accession>A0A0X1KG78</accession>
<accession>K7EL21</accession>
<accession>Q3MJA7</accession>
<accession>Q8NF12</accession>
<accession>Q8WUZ3</accession>
<reference key="1">
    <citation type="submission" date="2002-07" db="EMBL/GenBank/DDBJ databases">
        <title>The nucleotide sequence of a long cDNA clone isolated from human spleen.</title>
        <authorList>
            <person name="Jikuya H."/>
            <person name="Takano J."/>
            <person name="Kikuno R."/>
            <person name="Nagase T."/>
            <person name="Ohara O."/>
        </authorList>
    </citation>
    <scope>NUCLEOTIDE SEQUENCE [LARGE SCALE MRNA] (ISOFORM 1)</scope>
    <source>
        <tissue>Spleen</tissue>
    </source>
</reference>
<reference key="2">
    <citation type="journal article" date="2004" name="Nature">
        <title>The DNA sequence and biology of human chromosome 19.</title>
        <authorList>
            <person name="Grimwood J."/>
            <person name="Gordon L.A."/>
            <person name="Olsen A.S."/>
            <person name="Terry A."/>
            <person name="Schmutz J."/>
            <person name="Lamerdin J.E."/>
            <person name="Hellsten U."/>
            <person name="Goodstein D."/>
            <person name="Couronne O."/>
            <person name="Tran-Gyamfi M."/>
            <person name="Aerts A."/>
            <person name="Altherr M."/>
            <person name="Ashworth L."/>
            <person name="Bajorek E."/>
            <person name="Black S."/>
            <person name="Branscomb E."/>
            <person name="Caenepeel S."/>
            <person name="Carrano A.V."/>
            <person name="Caoile C."/>
            <person name="Chan Y.M."/>
            <person name="Christensen M."/>
            <person name="Cleland C.A."/>
            <person name="Copeland A."/>
            <person name="Dalin E."/>
            <person name="Dehal P."/>
            <person name="Denys M."/>
            <person name="Detter J.C."/>
            <person name="Escobar J."/>
            <person name="Flowers D."/>
            <person name="Fotopulos D."/>
            <person name="Garcia C."/>
            <person name="Georgescu A.M."/>
            <person name="Glavina T."/>
            <person name="Gomez M."/>
            <person name="Gonzales E."/>
            <person name="Groza M."/>
            <person name="Hammon N."/>
            <person name="Hawkins T."/>
            <person name="Haydu L."/>
            <person name="Ho I."/>
            <person name="Huang W."/>
            <person name="Israni S."/>
            <person name="Jett J."/>
            <person name="Kadner K."/>
            <person name="Kimball H."/>
            <person name="Kobayashi A."/>
            <person name="Larionov V."/>
            <person name="Leem S.-H."/>
            <person name="Lopez F."/>
            <person name="Lou Y."/>
            <person name="Lowry S."/>
            <person name="Malfatti S."/>
            <person name="Martinez D."/>
            <person name="McCready P.M."/>
            <person name="Medina C."/>
            <person name="Morgan J."/>
            <person name="Nelson K."/>
            <person name="Nolan M."/>
            <person name="Ovcharenko I."/>
            <person name="Pitluck S."/>
            <person name="Pollard M."/>
            <person name="Popkie A.P."/>
            <person name="Predki P."/>
            <person name="Quan G."/>
            <person name="Ramirez L."/>
            <person name="Rash S."/>
            <person name="Retterer J."/>
            <person name="Rodriguez A."/>
            <person name="Rogers S."/>
            <person name="Salamov A."/>
            <person name="Salazar A."/>
            <person name="She X."/>
            <person name="Smith D."/>
            <person name="Slezak T."/>
            <person name="Solovyev V."/>
            <person name="Thayer N."/>
            <person name="Tice H."/>
            <person name="Tsai M."/>
            <person name="Ustaszewska A."/>
            <person name="Vo N."/>
            <person name="Wagner M."/>
            <person name="Wheeler J."/>
            <person name="Wu K."/>
            <person name="Xie G."/>
            <person name="Yang J."/>
            <person name="Dubchak I."/>
            <person name="Furey T.S."/>
            <person name="DeJong P."/>
            <person name="Dickson M."/>
            <person name="Gordon D."/>
            <person name="Eichler E.E."/>
            <person name="Pennacchio L.A."/>
            <person name="Richardson P."/>
            <person name="Stubbs L."/>
            <person name="Rokhsar D.S."/>
            <person name="Myers R.M."/>
            <person name="Rubin E.M."/>
            <person name="Lucas S.M."/>
        </authorList>
    </citation>
    <scope>NUCLEOTIDE SEQUENCE [LARGE SCALE GENOMIC DNA]</scope>
</reference>
<reference key="3">
    <citation type="submission" date="2005-09" db="EMBL/GenBank/DDBJ databases">
        <authorList>
            <person name="Mural R.J."/>
            <person name="Istrail S."/>
            <person name="Sutton G.G."/>
            <person name="Florea L."/>
            <person name="Halpern A.L."/>
            <person name="Mobarry C.M."/>
            <person name="Lippert R."/>
            <person name="Walenz B."/>
            <person name="Shatkay H."/>
            <person name="Dew I."/>
            <person name="Miller J.R."/>
            <person name="Flanigan M.J."/>
            <person name="Edwards N.J."/>
            <person name="Bolanos R."/>
            <person name="Fasulo D."/>
            <person name="Halldorsson B.V."/>
            <person name="Hannenhalli S."/>
            <person name="Turner R."/>
            <person name="Yooseph S."/>
            <person name="Lu F."/>
            <person name="Nusskern D.R."/>
            <person name="Shue B.C."/>
            <person name="Zheng X.H."/>
            <person name="Zhong F."/>
            <person name="Delcher A.L."/>
            <person name="Huson D.H."/>
            <person name="Kravitz S.A."/>
            <person name="Mouchard L."/>
            <person name="Reinert K."/>
            <person name="Remington K.A."/>
            <person name="Clark A.G."/>
            <person name="Waterman M.S."/>
            <person name="Eichler E.E."/>
            <person name="Adams M.D."/>
            <person name="Hunkapiller M.W."/>
            <person name="Myers E.W."/>
            <person name="Venter J.C."/>
        </authorList>
    </citation>
    <scope>NUCLEOTIDE SEQUENCE [LARGE SCALE GENOMIC DNA]</scope>
</reference>
<reference key="4">
    <citation type="journal article" date="2004" name="Genome Res.">
        <title>The status, quality, and expansion of the NIH full-length cDNA project: the Mammalian Gene Collection (MGC).</title>
        <authorList>
            <consortium name="The MGC Project Team"/>
        </authorList>
    </citation>
    <scope>NUCLEOTIDE SEQUENCE [LARGE SCALE MRNA] (ISOFORM 3)</scope>
    <scope>[LARGE SCALE MRNA] OF 55-275 (ISOFORM 1)</scope>
    <scope>NUCLEOTIDE SEQUENCE [LARGE SCALE MRNA] OF 57-275 (ISOFORM 2)</scope>
    <source>
        <tissue>Brain</tissue>
        <tissue>Skin</tissue>
    </source>
</reference>
<reference key="5">
    <citation type="journal article" date="1997" name="Biochim. Biophys. Acta">
        <title>Cloning and sequence analysis of human calcyphosine complementary DNA.</title>
        <authorList>
            <person name="el Housni H."/>
            <person name="Radulescu A."/>
            <person name="Lecocq R."/>
            <person name="Dumont J.E."/>
            <person name="Christophe D."/>
        </authorList>
    </citation>
    <scope>NUCLEOTIDE SEQUENCE [MRNA] OF 87-275 (ISOFORM 1)</scope>
    <source>
        <tissue>Thyroid</tissue>
    </source>
</reference>
<reference key="6">
    <citation type="journal article" date="2008" name="J. Mol. Biol.">
        <title>Crystal-structure and biochemical characterization of recombinant human calcyphosine delineates a novel EF-hand-containing protein family.</title>
        <authorList>
            <person name="Dong H."/>
            <person name="Li X."/>
            <person name="Lou Z."/>
            <person name="Xu X."/>
            <person name="Su D."/>
            <person name="Zhou X."/>
            <person name="Zhou W."/>
            <person name="Bartlam M."/>
            <person name="Rao Z."/>
        </authorList>
    </citation>
    <scope>X-RAY CRYSTALLOGRAPHY (2.65 ANGSTROMS) IN COMPLEX WITH CALCIUM</scope>
    <scope>CALCIUM-BINDING</scope>
    <scope>SUBUNIT</scope>
</reference>
<reference key="7">
    <citation type="journal article" date="2018" name="Mol. Psychiatry">
        <title>Mapping autosomal recessive intellectual disability: combined microarray and exome sequencing identifies 26 novel candidate genes in 192 consanguineous families.</title>
        <authorList>
            <person name="Harripaul R."/>
            <person name="Vasli N."/>
            <person name="Mikhailov A."/>
            <person name="Rafiq M.A."/>
            <person name="Mittal K."/>
            <person name="Windpassinger C."/>
            <person name="Sheikh T.I."/>
            <person name="Noor A."/>
            <person name="Mahmood H."/>
            <person name="Downey S."/>
            <person name="Johnson M."/>
            <person name="Vleuten K."/>
            <person name="Bell L."/>
            <person name="Ilyas M."/>
            <person name="Khan F.S."/>
            <person name="Khan V."/>
            <person name="Moradi M."/>
            <person name="Ayaz M."/>
            <person name="Naeem F."/>
            <person name="Heidari A."/>
            <person name="Ahmed I."/>
            <person name="Ghadami S."/>
            <person name="Agha Z."/>
            <person name="Zeinali S."/>
            <person name="Qamar R."/>
            <person name="Mozhdehipanah H."/>
            <person name="John P."/>
            <person name="Mir A."/>
            <person name="Ansar M."/>
            <person name="French L."/>
            <person name="Ayub M."/>
            <person name="Vincent J.B."/>
        </authorList>
    </citation>
    <scope>VARIANT GLN-180</scope>
</reference>
<comment type="function">
    <text evidence="8">Calcium-binding protein. May play a role in cellular signaling events (Potential).</text>
</comment>
<comment type="subunit">
    <text evidence="4">Monomer. Does not form oligomers in the presence of calcium.</text>
</comment>
<comment type="subcellular location">
    <subcellularLocation>
        <location>Cytoplasm</location>
    </subcellularLocation>
</comment>
<comment type="alternative products">
    <event type="alternative splicing"/>
    <isoform>
        <id>Q13938-1</id>
        <name>1</name>
        <sequence type="displayed"/>
    </isoform>
    <isoform>
        <id>Q13938-3</id>
        <name>2</name>
        <sequence type="described" ref="VSP_055154"/>
    </isoform>
    <isoform>
        <id>Q13938-4</id>
        <name>3</name>
        <sequence type="described" ref="VSP_059695"/>
    </isoform>
</comment>
<comment type="sequence caution" evidence="8">
    <conflict type="erroneous initiation">
        <sequence resource="EMBL-CDS" id="AAC14484"/>
    </conflict>
    <text>Truncated N-terminus.</text>
</comment>
<comment type="sequence caution" evidence="8">
    <conflict type="erroneous initiation">
        <sequence resource="EMBL-CDS" id="AAH80599"/>
    </conflict>
    <text>Truncated N-terminus.</text>
</comment>
<comment type="sequence caution" evidence="8">
    <conflict type="erroneous initiation">
        <sequence resource="EMBL-CDS" id="BAC03450"/>
    </conflict>
    <text>Extended N-terminus.</text>
</comment>
<protein>
    <recommendedName>
        <fullName>Calcyphosin</fullName>
    </recommendedName>
    <alternativeName>
        <fullName>Calcyphosine</fullName>
    </alternativeName>
</protein>
<evidence type="ECO:0000255" key="1"/>
<evidence type="ECO:0000255" key="2">
    <source>
        <dbReference type="PROSITE-ProRule" id="PRU00448"/>
    </source>
</evidence>
<evidence type="ECO:0000256" key="3">
    <source>
        <dbReference type="SAM" id="MobiDB-lite"/>
    </source>
</evidence>
<evidence type="ECO:0000269" key="4">
    <source>
    </source>
</evidence>
<evidence type="ECO:0000269" key="5">
    <source>
    </source>
</evidence>
<evidence type="ECO:0000303" key="6">
    <source>
    </source>
</evidence>
<evidence type="ECO:0000303" key="7">
    <source>
    </source>
</evidence>
<evidence type="ECO:0000305" key="8"/>
<evidence type="ECO:0000312" key="9">
    <source>
        <dbReference type="HGNC" id="HGNC:1487"/>
    </source>
</evidence>
<evidence type="ECO:0007829" key="10">
    <source>
        <dbReference type="PDB" id="3E3R"/>
    </source>
</evidence>
<keyword id="KW-0002">3D-structure</keyword>
<keyword id="KW-0025">Alternative splicing</keyword>
<keyword id="KW-0106">Calcium</keyword>
<keyword id="KW-0963">Cytoplasm</keyword>
<keyword id="KW-0479">Metal-binding</keyword>
<keyword id="KW-0597">Phosphoprotein</keyword>
<keyword id="KW-1267">Proteomics identification</keyword>
<keyword id="KW-1185">Reference proteome</keyword>
<keyword id="KW-0677">Repeat</keyword>
<gene>
    <name evidence="7 9" type="primary">CAPS</name>
</gene>
<proteinExistence type="evidence at protein level"/>